<accession>P07340</accession>
<accession>Q63062</accession>
<comment type="function">
    <text evidence="2 7">This is the non-catalytic component of the active enzyme, which catalyzes the hydrolysis of ATP coupled with the exchange of Na(+) and K(+) ions across the plasma membrane. The beta subunit regulates, through assembly of alpha/beta heterodimers, the number of sodium pumps transported to the plasma membrane (PubMed:22328500). Plays a role in innate immunity by enhancing virus-triggered induction of interferons (IFNs) and interferon stimulated genes (ISGs). Mechanistically, enhances the ubiquitination of TRAF3 and TRAF6 as well as the phosphorylation of TAK1 and TBK1 (By similarity).</text>
</comment>
<comment type="function">
    <text evidence="7">Involved in cell adhesion and establishing epithelial cell polarity.</text>
</comment>
<comment type="subunit">
    <text evidence="2 3 5 6 8">The sodium/potassium-transporting ATPase is composed of a catalytic alpha subunit, an auxiliary non-catalytic beta subunit and an additional regulatory subunit (By similarity). Interacts with catalytic subunit ATP12A (PubMed:14749213). Interacts with regulatory subunit FXYD1 (PubMed:23532852). Interacts with regulatory subunit FXYD3 (PubMed:15743908). Interacts with NKAIN1, NKAIN2 and NKAIN4 (By similarity). Interacts with MLC1 (By similarity). Part of a complex containing MLC1, TRPV4, AQP4 and HEPACAM (By similarity). Interacts with KIRREL3 (By similarity). Interacts with OBSCN (via protein kinase domain 1) (By similarity). Interacts with TRAF3 and TRAF6 (By similarity).</text>
</comment>
<comment type="subcellular location">
    <subcellularLocation>
        <location evidence="4">Cell membrane</location>
        <topology evidence="4">Single-pass type II membrane protein</topology>
    </subcellularLocation>
    <subcellularLocation>
        <location evidence="5">Apical cell membrane</location>
        <topology evidence="4">Single-pass type II membrane protein</topology>
    </subcellularLocation>
    <subcellularLocation>
        <location evidence="3">Cell membrane</location>
        <location evidence="3">Sarcolemma</location>
    </subcellularLocation>
    <text evidence="3">Colocalizes with OBSCN at the intercalated disk and sarcolemma in cardiomyocytes. Localizes in long striations at the level of Z and M lines.</text>
</comment>
<comment type="tissue specificity">
    <text evidence="5">Expressed in the brain, liver, testes and anterior prostate (at protein level).</text>
</comment>
<comment type="domain">
    <text evidence="1">The C-terminal lobe folds into an immunoglobulin-like domain and mediates cell adhesion properties.</text>
</comment>
<comment type="PTM">
    <text evidence="3 5">Glutathionylated. N-glycosylated (PubMed:14749213).</text>
</comment>
<comment type="similarity">
    <text evidence="9">Belongs to the X(+)/potassium ATPases subunit beta family.</text>
</comment>
<proteinExistence type="evidence at protein level"/>
<organism>
    <name type="scientific">Rattus norvegicus</name>
    <name type="common">Rat</name>
    <dbReference type="NCBI Taxonomy" id="10116"/>
    <lineage>
        <taxon>Eukaryota</taxon>
        <taxon>Metazoa</taxon>
        <taxon>Chordata</taxon>
        <taxon>Craniata</taxon>
        <taxon>Vertebrata</taxon>
        <taxon>Euteleostomi</taxon>
        <taxon>Mammalia</taxon>
        <taxon>Eutheria</taxon>
        <taxon>Euarchontoglires</taxon>
        <taxon>Glires</taxon>
        <taxon>Rodentia</taxon>
        <taxon>Myomorpha</taxon>
        <taxon>Muroidea</taxon>
        <taxon>Muridae</taxon>
        <taxon>Murinae</taxon>
        <taxon>Rattus</taxon>
    </lineage>
</organism>
<reference key="1">
    <citation type="journal article" date="1986" name="Mol. Cell. Biol.">
        <title>Rat-brain Na,K-ATPase beta-chain gene: primary structure, tissue-specific expression, and amplification in ouabain-resistant HeLa C+ cells.</title>
        <authorList>
            <person name="Mercer R.W."/>
            <person name="Schneider J.W."/>
            <person name="Savitz A."/>
            <person name="Emanuel J.R."/>
            <person name="Benz E.J. Jr."/>
            <person name="Levenson R."/>
        </authorList>
    </citation>
    <scope>NUCLEOTIDE SEQUENCE [MRNA]</scope>
    <source>
        <tissue>Brain</tissue>
    </source>
</reference>
<reference key="2">
    <citation type="journal article" date="1987" name="J. Biol. Chem.">
        <title>Multiple mRNAs from rat kidney and brain encode a single Na+,K+-ATPase beta subunit protein.</title>
        <authorList>
            <person name="Young R.M."/>
            <person name="Shull G.E."/>
            <person name="Lingrel J.B."/>
        </authorList>
    </citation>
    <scope>NUCLEOTIDE SEQUENCE [MRNA]</scope>
</reference>
<reference key="3">
    <citation type="journal article" date="2004" name="Genome Res.">
        <title>The status, quality, and expansion of the NIH full-length cDNA project: the Mammalian Gene Collection (MGC).</title>
        <authorList>
            <consortium name="The MGC Project Team"/>
        </authorList>
    </citation>
    <scope>NUCLEOTIDE SEQUENCE [LARGE SCALE MRNA]</scope>
    <source>
        <tissue>Testis</tissue>
    </source>
</reference>
<reference key="4">
    <citation type="journal article" date="1992" name="Biochim. Biophys. Acta">
        <title>Characterization of the 5' flanking region of the rat Na+/K(+)-ATPase beta 1 subunit gene.</title>
        <authorList>
            <person name="Liu B."/>
            <person name="Gick G."/>
        </authorList>
    </citation>
    <scope>NUCLEOTIDE SEQUENCE [GENOMIC DNA] OF 1-32</scope>
</reference>
<reference key="5">
    <citation type="submission" date="2007-07" db="UniProtKB">
        <authorList>
            <person name="Lubec G."/>
            <person name="Kang S.U."/>
        </authorList>
    </citation>
    <scope>PROTEIN SEQUENCE OF 15-21; 72-85; 97-107; 205-217 AND 279-291</scope>
    <scope>IDENTIFICATION BY MASS SPECTROMETRY</scope>
    <source>
        <strain>Sprague-Dawley</strain>
        <tissue>Brain</tissue>
    </source>
</reference>
<reference key="6">
    <citation type="journal article" date="2004" name="Am. J. Physiol.">
        <title>Identification of the beta-subunit for nongastric H-K-ATPase in rat anterior prostate.</title>
        <authorList>
            <person name="Pestov N.B."/>
            <person name="Korneenko T.V."/>
            <person name="Radkov R."/>
            <person name="Zhao H."/>
            <person name="Shakhparonov M.I."/>
            <person name="Modyanov N.N."/>
        </authorList>
    </citation>
    <scope>INTERACTION WITH ATP12A</scope>
    <scope>TISSUE SPECIFICITY</scope>
    <scope>SUBCELLULAR LOCATION</scope>
    <scope>GLYCOSYLATION</scope>
</reference>
<reference key="7">
    <citation type="journal article" date="2005" name="Mol. Biol. Cell">
        <title>FXYD3 (Mat-8), a new regulator of Na,K-ATPase.</title>
        <authorList>
            <person name="Crambert G."/>
            <person name="Li C."/>
            <person name="Claeys D."/>
            <person name="Geering K."/>
        </authorList>
    </citation>
    <scope>INTERACTION WITH FXYD3</scope>
</reference>
<reference key="8">
    <citation type="journal article" date="2012" name="J. Cell Sci.">
        <title>Identification of the amino acid region involved in the intercellular interaction between the beta1 subunits of Na+/K+ -ATPase.</title>
        <authorList>
            <person name="Tokhtaeva E."/>
            <person name="Sachs G."/>
            <person name="Sun H."/>
            <person name="Dada L.A."/>
            <person name="Sznajder J.I."/>
            <person name="Vagin O."/>
        </authorList>
    </citation>
    <scope>FUNCTION IN ADHESION</scope>
</reference>
<reference key="9">
    <citation type="journal article" date="2012" name="Nat. Commun.">
        <title>Quantitative maps of protein phosphorylation sites across 14 different rat organs and tissues.</title>
        <authorList>
            <person name="Lundby A."/>
            <person name="Secher A."/>
            <person name="Lage K."/>
            <person name="Nordsborg N.B."/>
            <person name="Dmytriyev A."/>
            <person name="Lundby C."/>
            <person name="Olsen J.V."/>
        </authorList>
    </citation>
    <scope>PHOSPHORYLATION [LARGE SCALE ANALYSIS] AT SER-11</scope>
    <scope>IDENTIFICATION BY MASS SPECTROMETRY [LARGE SCALE ANALYSIS]</scope>
</reference>
<reference key="10">
    <citation type="journal article" date="2013" name="J. Biol. Chem.">
        <title>A separate pool of cardiac phospholemman that does not regulate or associate with the sodium pump: multimers of phospholemman in ventricular muscle.</title>
        <authorList>
            <person name="Wypijewski K.J."/>
            <person name="Howie J."/>
            <person name="Reilly L."/>
            <person name="Tulloch L.B."/>
            <person name="Aughton K.L."/>
            <person name="McLatchie L.M."/>
            <person name="Shattock M.J."/>
            <person name="Calaghan S.C."/>
            <person name="Fuller W."/>
        </authorList>
    </citation>
    <scope>INTERACTION WITH FXYD1</scope>
</reference>
<reference key="11">
    <citation type="journal article" date="2013" name="J. Proteome Res.">
        <title>Site-specific glycan-peptide analysis for determination of N-glycoproteome heterogeneity.</title>
        <authorList>
            <person name="Parker B.L."/>
            <person name="Thaysen-Andersen M."/>
            <person name="Solis N."/>
            <person name="Scott N.E."/>
            <person name="Larsen M.R."/>
            <person name="Graham M.E."/>
            <person name="Packer N.H."/>
            <person name="Cordwell S.J."/>
        </authorList>
    </citation>
    <scope>GLYCOSYLATION [LARGE SCALE ANALYSIS] AT ASN-158 AND ASN-193</scope>
    <scope>IDENTIFICATION BY MASS SPECTROMETRY [LARGE SCALE ANALYSIS]</scope>
    <source>
        <tissue>Brain</tissue>
    </source>
</reference>
<dbReference type="EMBL" id="M14137">
    <property type="protein sequence ID" value="AAA40781.1"/>
    <property type="molecule type" value="mRNA"/>
</dbReference>
<dbReference type="EMBL" id="J02701">
    <property type="protein sequence ID" value="AAA40780.1"/>
    <property type="molecule type" value="mRNA"/>
</dbReference>
<dbReference type="EMBL" id="BC078902">
    <property type="protein sequence ID" value="AAH78902.1"/>
    <property type="molecule type" value="mRNA"/>
</dbReference>
<dbReference type="EMBL" id="X63375">
    <property type="status" value="NOT_ANNOTATED_CDS"/>
    <property type="molecule type" value="Genomic_DNA"/>
</dbReference>
<dbReference type="PIR" id="A25082">
    <property type="entry name" value="PWRTNB"/>
</dbReference>
<dbReference type="RefSeq" id="NP_037245.2">
    <property type="nucleotide sequence ID" value="NM_013113.2"/>
</dbReference>
<dbReference type="PDB" id="7X20">
    <property type="method" value="X-ray"/>
    <property type="resolution" value="3.30 A"/>
    <property type="chains" value="B=1-304"/>
</dbReference>
<dbReference type="PDB" id="7X21">
    <property type="method" value="EM"/>
    <property type="resolution" value="2.80 A"/>
    <property type="chains" value="B=1-304"/>
</dbReference>
<dbReference type="PDB" id="7X22">
    <property type="method" value="EM"/>
    <property type="resolution" value="3.00 A"/>
    <property type="chains" value="B=1-304"/>
</dbReference>
<dbReference type="PDB" id="7X23">
    <property type="method" value="EM"/>
    <property type="resolution" value="3.20 A"/>
    <property type="chains" value="B=1-304"/>
</dbReference>
<dbReference type="PDB" id="7X24">
    <property type="method" value="EM"/>
    <property type="resolution" value="3.40 A"/>
    <property type="chains" value="B=1-304"/>
</dbReference>
<dbReference type="PDB" id="8IJL">
    <property type="method" value="EM"/>
    <property type="resolution" value="2.62 A"/>
    <property type="chains" value="B=1-304"/>
</dbReference>
<dbReference type="PDB" id="8IJM">
    <property type="method" value="EM"/>
    <property type="resolution" value="3.13 A"/>
    <property type="chains" value="B=1-304"/>
</dbReference>
<dbReference type="PDBsum" id="7X20"/>
<dbReference type="PDBsum" id="7X21"/>
<dbReference type="PDBsum" id="7X22"/>
<dbReference type="PDBsum" id="7X23"/>
<dbReference type="PDBsum" id="7X24"/>
<dbReference type="PDBsum" id="8IJL"/>
<dbReference type="PDBsum" id="8IJM"/>
<dbReference type="EMDB" id="EMD-32954"/>
<dbReference type="EMDB" id="EMD-32955"/>
<dbReference type="EMDB" id="EMD-32956"/>
<dbReference type="EMDB" id="EMD-32957"/>
<dbReference type="EMDB" id="EMD-35488"/>
<dbReference type="EMDB" id="EMD-35489"/>
<dbReference type="SMR" id="P07340"/>
<dbReference type="BioGRID" id="247679">
    <property type="interactions" value="6"/>
</dbReference>
<dbReference type="FunCoup" id="P07340">
    <property type="interactions" value="1784"/>
</dbReference>
<dbReference type="IntAct" id="P07340">
    <property type="interactions" value="7"/>
</dbReference>
<dbReference type="MINT" id="P07340"/>
<dbReference type="STRING" id="10116.ENSRNOP00000003932"/>
<dbReference type="BindingDB" id="P07340"/>
<dbReference type="ChEMBL" id="CHEMBL4106147"/>
<dbReference type="ChEMBL" id="CHEMBL4106148"/>
<dbReference type="ChEMBL" id="CHEMBL4106149"/>
<dbReference type="ChEMBL" id="CHEMBL4106165"/>
<dbReference type="GlyCosmos" id="P07340">
    <property type="glycosylation" value="3 sites, 46 glycans"/>
</dbReference>
<dbReference type="GlyGen" id="P07340">
    <property type="glycosylation" value="3 sites, 48 N-linked glycans (2 sites), 2 N-linked;o-linked glycans (1 site)"/>
</dbReference>
<dbReference type="iPTMnet" id="P07340"/>
<dbReference type="PhosphoSitePlus" id="P07340"/>
<dbReference type="SwissPalm" id="P07340"/>
<dbReference type="jPOST" id="P07340"/>
<dbReference type="PaxDb" id="10116-ENSRNOP00000003932"/>
<dbReference type="GeneID" id="25650"/>
<dbReference type="KEGG" id="rno:25650"/>
<dbReference type="UCSC" id="RGD:2170">
    <property type="organism name" value="rat"/>
</dbReference>
<dbReference type="AGR" id="RGD:2170"/>
<dbReference type="CTD" id="481"/>
<dbReference type="RGD" id="2170">
    <property type="gene designation" value="Atp1b1"/>
</dbReference>
<dbReference type="VEuPathDB" id="HostDB:ENSRNOG00000002934"/>
<dbReference type="eggNOG" id="KOG3927">
    <property type="taxonomic scope" value="Eukaryota"/>
</dbReference>
<dbReference type="HOGENOM" id="CLU_057702_2_0_1"/>
<dbReference type="InParanoid" id="P07340"/>
<dbReference type="OrthoDB" id="5912413at2759"/>
<dbReference type="PhylomeDB" id="P07340"/>
<dbReference type="TreeFam" id="TF314618"/>
<dbReference type="Reactome" id="R-RNO-210991">
    <property type="pathway name" value="Basigin interactions"/>
</dbReference>
<dbReference type="Reactome" id="R-RNO-5578775">
    <property type="pathway name" value="Ion homeostasis"/>
</dbReference>
<dbReference type="Reactome" id="R-RNO-936837">
    <property type="pathway name" value="Ion transport by P-type ATPases"/>
</dbReference>
<dbReference type="SABIO-RK" id="P07340"/>
<dbReference type="PRO" id="PR:P07340"/>
<dbReference type="Proteomes" id="UP000002494">
    <property type="component" value="Chromosome 13"/>
</dbReference>
<dbReference type="Bgee" id="ENSRNOG00000002934">
    <property type="expression patterns" value="Expressed in cerebellum and 20 other cell types or tissues"/>
</dbReference>
<dbReference type="ExpressionAtlas" id="P07340">
    <property type="expression patterns" value="baseline and differential"/>
</dbReference>
<dbReference type="GO" id="GO:0016324">
    <property type="term" value="C:apical plasma membrane"/>
    <property type="evidence" value="ECO:0000314"/>
    <property type="project" value="UniProtKB"/>
</dbReference>
<dbReference type="GO" id="GO:0016323">
    <property type="term" value="C:basolateral plasma membrane"/>
    <property type="evidence" value="ECO:0000314"/>
    <property type="project" value="RGD"/>
</dbReference>
<dbReference type="GO" id="GO:0005901">
    <property type="term" value="C:caveola"/>
    <property type="evidence" value="ECO:0000314"/>
    <property type="project" value="RGD"/>
</dbReference>
<dbReference type="GO" id="GO:0014704">
    <property type="term" value="C:intercalated disc"/>
    <property type="evidence" value="ECO:0000266"/>
    <property type="project" value="RGD"/>
</dbReference>
<dbReference type="GO" id="GO:0016328">
    <property type="term" value="C:lateral plasma membrane"/>
    <property type="evidence" value="ECO:0000266"/>
    <property type="project" value="RGD"/>
</dbReference>
<dbReference type="GO" id="GO:0016020">
    <property type="term" value="C:membrane"/>
    <property type="evidence" value="ECO:0000314"/>
    <property type="project" value="ARUK-UCL"/>
</dbReference>
<dbReference type="GO" id="GO:0031090">
    <property type="term" value="C:organelle membrane"/>
    <property type="evidence" value="ECO:0000266"/>
    <property type="project" value="RGD"/>
</dbReference>
<dbReference type="GO" id="GO:0005886">
    <property type="term" value="C:plasma membrane"/>
    <property type="evidence" value="ECO:0000266"/>
    <property type="project" value="RGD"/>
</dbReference>
<dbReference type="GO" id="GO:0042383">
    <property type="term" value="C:sarcolemma"/>
    <property type="evidence" value="ECO:0000266"/>
    <property type="project" value="RGD"/>
</dbReference>
<dbReference type="GO" id="GO:0005890">
    <property type="term" value="C:sodium:potassium-exchanging ATPase complex"/>
    <property type="evidence" value="ECO:0000314"/>
    <property type="project" value="ARUK-UCL"/>
</dbReference>
<dbReference type="GO" id="GO:0036126">
    <property type="term" value="C:sperm flagellum"/>
    <property type="evidence" value="ECO:0000266"/>
    <property type="project" value="RGD"/>
</dbReference>
<dbReference type="GO" id="GO:0030315">
    <property type="term" value="C:T-tubule"/>
    <property type="evidence" value="ECO:0000266"/>
    <property type="project" value="RGD"/>
</dbReference>
<dbReference type="GO" id="GO:0001671">
    <property type="term" value="F:ATPase activator activity"/>
    <property type="evidence" value="ECO:0000266"/>
    <property type="project" value="RGD"/>
</dbReference>
<dbReference type="GO" id="GO:0051117">
    <property type="term" value="F:ATPase binding"/>
    <property type="evidence" value="ECO:0000266"/>
    <property type="project" value="RGD"/>
</dbReference>
<dbReference type="GO" id="GO:0005391">
    <property type="term" value="F:P-type sodium:potassium-exchanging transporter activity"/>
    <property type="evidence" value="ECO:0000314"/>
    <property type="project" value="RGD"/>
</dbReference>
<dbReference type="GO" id="GO:0046982">
    <property type="term" value="F:protein heterodimerization activity"/>
    <property type="evidence" value="ECO:0000353"/>
    <property type="project" value="ARUK-UCL"/>
</dbReference>
<dbReference type="GO" id="GO:0019901">
    <property type="term" value="F:protein kinase binding"/>
    <property type="evidence" value="ECO:0000266"/>
    <property type="project" value="RGD"/>
</dbReference>
<dbReference type="GO" id="GO:0030674">
    <property type="term" value="F:protein-macromolecule adaptor activity"/>
    <property type="evidence" value="ECO:0000266"/>
    <property type="project" value="RGD"/>
</dbReference>
<dbReference type="GO" id="GO:0141109">
    <property type="term" value="F:transporter activator activity"/>
    <property type="evidence" value="ECO:0000266"/>
    <property type="project" value="RGD"/>
</dbReference>
<dbReference type="GO" id="GO:0046034">
    <property type="term" value="P:ATP metabolic process"/>
    <property type="evidence" value="ECO:0000266"/>
    <property type="project" value="RGD"/>
</dbReference>
<dbReference type="GO" id="GO:0001824">
    <property type="term" value="P:blastocyst development"/>
    <property type="evidence" value="ECO:0000266"/>
    <property type="project" value="RGD"/>
</dbReference>
<dbReference type="GO" id="GO:0060048">
    <property type="term" value="P:cardiac muscle contraction"/>
    <property type="evidence" value="ECO:0000266"/>
    <property type="project" value="RGD"/>
</dbReference>
<dbReference type="GO" id="GO:0007155">
    <property type="term" value="P:cell adhesion"/>
    <property type="evidence" value="ECO:0007669"/>
    <property type="project" value="UniProtKB-KW"/>
</dbReference>
<dbReference type="GO" id="GO:0045087">
    <property type="term" value="P:innate immune response"/>
    <property type="evidence" value="ECO:0007669"/>
    <property type="project" value="UniProtKB-KW"/>
</dbReference>
<dbReference type="GO" id="GO:0006874">
    <property type="term" value="P:intracellular calcium ion homeostasis"/>
    <property type="evidence" value="ECO:0000266"/>
    <property type="project" value="RGD"/>
</dbReference>
<dbReference type="GO" id="GO:0030007">
    <property type="term" value="P:intracellular potassium ion homeostasis"/>
    <property type="evidence" value="ECO:0000266"/>
    <property type="project" value="RGD"/>
</dbReference>
<dbReference type="GO" id="GO:0006883">
    <property type="term" value="P:intracellular sodium ion homeostasis"/>
    <property type="evidence" value="ECO:0000266"/>
    <property type="project" value="RGD"/>
</dbReference>
<dbReference type="GO" id="GO:0086009">
    <property type="term" value="P:membrane repolarization"/>
    <property type="evidence" value="ECO:0000266"/>
    <property type="project" value="RGD"/>
</dbReference>
<dbReference type="GO" id="GO:0030001">
    <property type="term" value="P:metal ion transport"/>
    <property type="evidence" value="ECO:0000314"/>
    <property type="project" value="RGD"/>
</dbReference>
<dbReference type="GO" id="GO:1903288">
    <property type="term" value="P:positive regulation of potassium ion import across plasma membrane"/>
    <property type="evidence" value="ECO:0000266"/>
    <property type="project" value="RGD"/>
</dbReference>
<dbReference type="GO" id="GO:1901381">
    <property type="term" value="P:positive regulation of potassium ion transmembrane transport"/>
    <property type="evidence" value="ECO:0000266"/>
    <property type="project" value="RGD"/>
</dbReference>
<dbReference type="GO" id="GO:1903278">
    <property type="term" value="P:positive regulation of sodium ion export across plasma membrane"/>
    <property type="evidence" value="ECO:0000266"/>
    <property type="project" value="RGD"/>
</dbReference>
<dbReference type="GO" id="GO:1902307">
    <property type="term" value="P:positive regulation of sodium ion transmembrane transport"/>
    <property type="evidence" value="ECO:0000266"/>
    <property type="project" value="RGD"/>
</dbReference>
<dbReference type="GO" id="GO:1990573">
    <property type="term" value="P:potassium ion import across plasma membrane"/>
    <property type="evidence" value="ECO:0000266"/>
    <property type="project" value="RGD"/>
</dbReference>
<dbReference type="GO" id="GO:0006813">
    <property type="term" value="P:potassium ion transport"/>
    <property type="evidence" value="ECO:0000314"/>
    <property type="project" value="RGD"/>
</dbReference>
<dbReference type="GO" id="GO:0072659">
    <property type="term" value="P:protein localization to plasma membrane"/>
    <property type="evidence" value="ECO:0000266"/>
    <property type="project" value="RGD"/>
</dbReference>
<dbReference type="GO" id="GO:0050821">
    <property type="term" value="P:protein stabilization"/>
    <property type="evidence" value="ECO:0000266"/>
    <property type="project" value="RGD"/>
</dbReference>
<dbReference type="GO" id="GO:1903169">
    <property type="term" value="P:regulation of calcium ion transmembrane transport"/>
    <property type="evidence" value="ECO:0000266"/>
    <property type="project" value="RGD"/>
</dbReference>
<dbReference type="GO" id="GO:0010882">
    <property type="term" value="P:regulation of cardiac muscle contraction by calcium ion signaling"/>
    <property type="evidence" value="ECO:0000266"/>
    <property type="project" value="RGD"/>
</dbReference>
<dbReference type="GO" id="GO:0010468">
    <property type="term" value="P:regulation of gene expression"/>
    <property type="evidence" value="ECO:0000266"/>
    <property type="project" value="RGD"/>
</dbReference>
<dbReference type="GO" id="GO:0055119">
    <property type="term" value="P:relaxation of cardiac muscle"/>
    <property type="evidence" value="ECO:0000266"/>
    <property type="project" value="RGD"/>
</dbReference>
<dbReference type="GO" id="GO:0001666">
    <property type="term" value="P:response to hypoxia"/>
    <property type="evidence" value="ECO:0000314"/>
    <property type="project" value="RGD"/>
</dbReference>
<dbReference type="GO" id="GO:0036376">
    <property type="term" value="P:sodium ion export across plasma membrane"/>
    <property type="evidence" value="ECO:0000266"/>
    <property type="project" value="RGD"/>
</dbReference>
<dbReference type="GO" id="GO:0035725">
    <property type="term" value="P:sodium ion transmembrane transport"/>
    <property type="evidence" value="ECO:0000266"/>
    <property type="project" value="RGD"/>
</dbReference>
<dbReference type="GO" id="GO:0006814">
    <property type="term" value="P:sodium ion transport"/>
    <property type="evidence" value="ECO:0000314"/>
    <property type="project" value="RGD"/>
</dbReference>
<dbReference type="GO" id="GO:0055085">
    <property type="term" value="P:transmembrane transport"/>
    <property type="evidence" value="ECO:0000266"/>
    <property type="project" value="RGD"/>
</dbReference>
<dbReference type="FunFam" id="1.20.5.170:FF:000062">
    <property type="entry name" value="Sodium/potassium-transporting ATPase subunit beta"/>
    <property type="match status" value="1"/>
</dbReference>
<dbReference type="FunFam" id="2.60.40.1660:FF:000002">
    <property type="entry name" value="Sodium/potassium-transporting ATPase subunit beta"/>
    <property type="match status" value="1"/>
</dbReference>
<dbReference type="Gene3D" id="1.20.5.170">
    <property type="match status" value="1"/>
</dbReference>
<dbReference type="Gene3D" id="2.60.40.1660">
    <property type="entry name" value="Na, k-atpase alpha subunit"/>
    <property type="match status" value="1"/>
</dbReference>
<dbReference type="InterPro" id="IPR000402">
    <property type="entry name" value="Na/K_ATPase_sub_beta"/>
</dbReference>
<dbReference type="InterPro" id="IPR038702">
    <property type="entry name" value="Na/K_ATPase_sub_beta_sf"/>
</dbReference>
<dbReference type="NCBIfam" id="TIGR01107">
    <property type="entry name" value="Na_K_ATPase_bet"/>
    <property type="match status" value="1"/>
</dbReference>
<dbReference type="PANTHER" id="PTHR11523">
    <property type="entry name" value="SODIUM/POTASSIUM-DEPENDENT ATPASE BETA SUBUNIT"/>
    <property type="match status" value="1"/>
</dbReference>
<dbReference type="PANTHER" id="PTHR11523:SF10">
    <property type="entry name" value="SODIUM_POTASSIUM-TRANSPORTING ATPASE SUBUNIT BETA-1"/>
    <property type="match status" value="1"/>
</dbReference>
<dbReference type="Pfam" id="PF00287">
    <property type="entry name" value="Na_K-ATPase"/>
    <property type="match status" value="1"/>
</dbReference>
<dbReference type="PROSITE" id="PS00390">
    <property type="entry name" value="ATPASE_NA_K_BETA_1"/>
    <property type="match status" value="1"/>
</dbReference>
<dbReference type="PROSITE" id="PS00391">
    <property type="entry name" value="ATPASE_NA_K_BETA_2"/>
    <property type="match status" value="1"/>
</dbReference>
<gene>
    <name type="primary">Atp1b1</name>
</gene>
<protein>
    <recommendedName>
        <fullName>Sodium/potassium-transporting ATPase subunit beta-1</fullName>
    </recommendedName>
    <alternativeName>
        <fullName>Sodium/potassium-dependent ATPase subunit beta-1</fullName>
    </alternativeName>
</protein>
<feature type="chain" id="PRO_0000219100" description="Sodium/potassium-transporting ATPase subunit beta-1">
    <location>
        <begin position="1"/>
        <end position="304"/>
    </location>
</feature>
<feature type="topological domain" description="Cytoplasmic" evidence="4">
    <location>
        <begin position="1"/>
        <end position="34"/>
    </location>
</feature>
<feature type="transmembrane region" description="Helical; Signal-anchor for type II membrane protein" evidence="4">
    <location>
        <begin position="35"/>
        <end position="62"/>
    </location>
</feature>
<feature type="topological domain" description="Extracellular" evidence="4">
    <location>
        <begin position="63"/>
        <end position="304"/>
    </location>
</feature>
<feature type="region of interest" description="immunoglobulin-like" evidence="1">
    <location>
        <begin position="191"/>
        <end position="304"/>
    </location>
</feature>
<feature type="modified residue" description="Phosphoserine" evidence="10">
    <location>
        <position position="11"/>
    </location>
</feature>
<feature type="modified residue" description="Phosphotyrosine" evidence="3">
    <location>
        <position position="101"/>
    </location>
</feature>
<feature type="glycosylation site" description="N-linked (GlcNAc...) asparagine" evidence="11">
    <location>
        <position position="158"/>
    </location>
</feature>
<feature type="glycosylation site" description="N-linked (GlcNAc...) asparagine" evidence="11">
    <location>
        <position position="193"/>
    </location>
</feature>
<feature type="glycosylation site" description="N-linked (GlcNAc...) asparagine" evidence="1">
    <location>
        <position position="266"/>
    </location>
</feature>
<feature type="disulfide bond" evidence="1">
    <location>
        <begin position="126"/>
        <end position="149"/>
    </location>
</feature>
<feature type="disulfide bond" evidence="1">
    <location>
        <begin position="159"/>
        <end position="175"/>
    </location>
</feature>
<feature type="disulfide bond" evidence="1">
    <location>
        <begin position="214"/>
        <end position="277"/>
    </location>
</feature>
<feature type="sequence conflict" description="In Ref. 2; AAA40780." evidence="9" ref="2">
    <original>V</original>
    <variation>M</variation>
    <location>
        <position position="183"/>
    </location>
</feature>
<feature type="helix" evidence="15">
    <location>
        <begin position="31"/>
        <end position="59"/>
    </location>
</feature>
<feature type="strand" evidence="15">
    <location>
        <begin position="63"/>
        <end position="65"/>
    </location>
</feature>
<feature type="turn" evidence="15">
    <location>
        <begin position="70"/>
        <end position="72"/>
    </location>
</feature>
<feature type="strand" evidence="15">
    <location>
        <begin position="76"/>
        <end position="81"/>
    </location>
</feature>
<feature type="strand" evidence="15">
    <location>
        <begin position="87"/>
        <end position="90"/>
    </location>
</feature>
<feature type="strand" evidence="14">
    <location>
        <begin position="92"/>
        <end position="94"/>
    </location>
</feature>
<feature type="turn" evidence="15">
    <location>
        <begin position="95"/>
        <end position="97"/>
    </location>
</feature>
<feature type="helix" evidence="15">
    <location>
        <begin position="99"/>
        <end position="109"/>
    </location>
</feature>
<feature type="helix" evidence="15">
    <location>
        <begin position="110"/>
        <end position="112"/>
    </location>
</feature>
<feature type="helix" evidence="15">
    <location>
        <begin position="115"/>
        <end position="117"/>
    </location>
</feature>
<feature type="turn" evidence="15">
    <location>
        <begin position="120"/>
        <end position="122"/>
    </location>
</feature>
<feature type="strand" evidence="15">
    <location>
        <begin position="139"/>
        <end position="141"/>
    </location>
</feature>
<feature type="helix" evidence="15">
    <location>
        <begin position="153"/>
        <end position="155"/>
    </location>
</feature>
<feature type="strand" evidence="15">
    <location>
        <begin position="158"/>
        <end position="163"/>
    </location>
</feature>
<feature type="turn" evidence="15">
    <location>
        <begin position="165"/>
        <end position="172"/>
    </location>
</feature>
<feature type="strand" evidence="15">
    <location>
        <begin position="175"/>
        <end position="180"/>
    </location>
</feature>
<feature type="strand" evidence="12">
    <location>
        <begin position="193"/>
        <end position="195"/>
    </location>
</feature>
<feature type="helix" evidence="13">
    <location>
        <begin position="206"/>
        <end position="208"/>
    </location>
</feature>
<feature type="strand" evidence="15">
    <location>
        <begin position="209"/>
        <end position="218"/>
    </location>
</feature>
<feature type="helix" evidence="15">
    <location>
        <begin position="221"/>
        <end position="224"/>
    </location>
</feature>
<feature type="strand" evidence="15">
    <location>
        <begin position="229"/>
        <end position="231"/>
    </location>
</feature>
<feature type="helix" evidence="15">
    <location>
        <begin position="233"/>
        <end position="235"/>
    </location>
</feature>
<feature type="strand" evidence="15">
    <location>
        <begin position="237"/>
        <end position="240"/>
    </location>
</feature>
<feature type="helix" evidence="15">
    <location>
        <begin position="241"/>
        <end position="243"/>
    </location>
</feature>
<feature type="turn" evidence="15">
    <location>
        <begin position="249"/>
        <end position="251"/>
    </location>
</feature>
<feature type="strand" evidence="15">
    <location>
        <begin position="260"/>
        <end position="263"/>
    </location>
</feature>
<feature type="strand" evidence="15">
    <location>
        <begin position="273"/>
        <end position="279"/>
    </location>
</feature>
<feature type="strand" evidence="16">
    <location>
        <begin position="281"/>
        <end position="283"/>
    </location>
</feature>
<feature type="strand" evidence="15">
    <location>
        <begin position="293"/>
        <end position="302"/>
    </location>
</feature>
<evidence type="ECO:0000250" key="1"/>
<evidence type="ECO:0000250" key="2">
    <source>
        <dbReference type="UniProtKB" id="P05026"/>
    </source>
</evidence>
<evidence type="ECO:0000250" key="3">
    <source>
        <dbReference type="UniProtKB" id="P14094"/>
    </source>
</evidence>
<evidence type="ECO:0000255" key="4"/>
<evidence type="ECO:0000269" key="5">
    <source>
    </source>
</evidence>
<evidence type="ECO:0000269" key="6">
    <source>
    </source>
</evidence>
<evidence type="ECO:0000269" key="7">
    <source>
    </source>
</evidence>
<evidence type="ECO:0000269" key="8">
    <source>
    </source>
</evidence>
<evidence type="ECO:0000305" key="9"/>
<evidence type="ECO:0007744" key="10">
    <source>
    </source>
</evidence>
<evidence type="ECO:0007744" key="11">
    <source>
    </source>
</evidence>
<evidence type="ECO:0007829" key="12">
    <source>
        <dbReference type="PDB" id="7X20"/>
    </source>
</evidence>
<evidence type="ECO:0007829" key="13">
    <source>
        <dbReference type="PDB" id="7X21"/>
    </source>
</evidence>
<evidence type="ECO:0007829" key="14">
    <source>
        <dbReference type="PDB" id="7X24"/>
    </source>
</evidence>
<evidence type="ECO:0007829" key="15">
    <source>
        <dbReference type="PDB" id="8IJL"/>
    </source>
</evidence>
<evidence type="ECO:0007829" key="16">
    <source>
        <dbReference type="PDB" id="8IJM"/>
    </source>
</evidence>
<name>AT1B1_RAT</name>
<keyword id="KW-0002">3D-structure</keyword>
<keyword id="KW-0130">Cell adhesion</keyword>
<keyword id="KW-1003">Cell membrane</keyword>
<keyword id="KW-0903">Direct protein sequencing</keyword>
<keyword id="KW-1015">Disulfide bond</keyword>
<keyword id="KW-0318">Glutathionylation</keyword>
<keyword id="KW-0325">Glycoprotein</keyword>
<keyword id="KW-0391">Immunity</keyword>
<keyword id="KW-0399">Innate immunity</keyword>
<keyword id="KW-0406">Ion transport</keyword>
<keyword id="KW-0472">Membrane</keyword>
<keyword id="KW-0597">Phosphoprotein</keyword>
<keyword id="KW-0630">Potassium</keyword>
<keyword id="KW-0633">Potassium transport</keyword>
<keyword id="KW-1185">Reference proteome</keyword>
<keyword id="KW-0735">Signal-anchor</keyword>
<keyword id="KW-0915">Sodium</keyword>
<keyword id="KW-0739">Sodium transport</keyword>
<keyword id="KW-0740">Sodium/potassium transport</keyword>
<keyword id="KW-0812">Transmembrane</keyword>
<keyword id="KW-1133">Transmembrane helix</keyword>
<keyword id="KW-0813">Transport</keyword>
<sequence length="304" mass="35202">MARGKAKEEGSWKKFIWNSEKKEFLGRTGGSWFKILLFYVIFYGCLAGIFIGTIQVMLLTISELKPTYQDRVAPPGLTQIPQIQKTEISFRPNDPKSYEAYVLNIIRFLEKYKDSAQKDDMIFEDCGSMPSEPKERGEFNHERGERKVCRFKLDWLGNCSGLNDESYGYKEGKPCIIIKLNRVLGFKPKPPKNESLETYPLTMKYNPNVLPVQCTGKRDEDKDKVGNIEYFGMGGFYGFPLQYYPYYGKLLQPKYLQPLLAVQFTNLTLDTEIRIECKAYGENIGYSEKDRFQGRFDVKIEVKS</sequence>